<gene>
    <name evidence="11" type="primary">ver-3</name>
    <name evidence="11" type="ORF">F59F3.1</name>
</gene>
<sequence length="1227" mass="140549">MKLKLTVLLILVHASASYKPPAIEVEDYQVQEHDSIGKFVELEEHTRLILKCSAHHNGDLKYNFPSMEGNVGYDENNFKKRMEEYYDDAFGDKVLTLNDVRESDTGTYSCSSMEHSSLNDTIYVFVHRKKVFLPLKSVMIIYKQGEVMVPCKTTKFVDKSDIELYASNVLVKEASKYNYDQRYGFKITKKLYSEKQIVDVNFECRYKKEENQTATYIITEKEASSDDGYHFSWEKGFQWPHVGYNFSLTCNLNYNGSKIFHGYTNKLSIECPQCSHDPGSHVHVDRHRIIGNKISTTVRIQHLELEDSGKYTCIWEHENKETKYTDYHLYVAPKKAQIKVIETSPTIMRIKENRATSLTAKFAIYPFEKESYTAKWSRIYNSSIHEGPQSETIINDDFRKIAATSFGDGAFSENLDIKAFAVSTNMSGTYVLSISHMDTVQVVQWEVAIENDEPDVQITVREPSSFFISNQEYYKPDTNLHIECISISIPPADVVFEYKTKNSEQFQEIEPNKLVSVGGTFDRGLIYNVTFTEGMDLKCSSIRKGNRAITVNKLIKIGEGFEVRPHHEKSSKATESEPSKIIYEGDNVKLTCVFPLDSDDWSVSWRFENSKSSDISSIPTTTETEIKQYSKHLILNLRDVTTSFTGTYTCVVKNEDSEKLLETSIDVKAISKPSITGGNSNAVVIVDYDQYFEINCNMTGTPPPVYQWFKDGNPYTHGDVDGSILRVSRARGEDDGEFHCLATNRAGDKLNSIEVQVNNAPKGSLFFYWFLALLLLISIIAVFLLTCKLRASNRLTKQKDIALNTLYETMIKHQAGPLPEEMKDLPVEERTYYLPYNNDYEIDPVNLEILNPIGSGHFGVVKKGLLGMAYPKSKIESKTRLPVAVKSSTNPFNVELQKMMAEELKVMCAIPKNPNVLALIGAVTKNMRQGQLYIVTEFIDGGNLREFLQAHRNTFINELVEDEHVPVDDSYLVPNSVKKKIYKFDEKLGEGTRLLVEDPDALCTSDLLSIGLQIAKGMAWLADVPCVHRDLACRNVLITKTKIVRIADFGLSKKHTNKTYYRTKKSKDTPLPVRWMPLECIEEFKFTQKSDVWSFGICLYEIFTLGGTPYPNCDTFNVIEFIRNGNRNKQPEYCHDEIYELMKVCWQFNPKDRPTFNDCITFFENHMRDSSSQFLERVENMLHTEMQEQSKLDDWIQDSRPDVPNVSFQKSPKKQKEERYLIVESHA</sequence>
<reference evidence="10" key="1">
    <citation type="journal article" date="1998" name="Science">
        <title>Genome sequence of the nematode C. elegans: a platform for investigating biology.</title>
        <authorList>
            <consortium name="The C. elegans sequencing consortium"/>
        </authorList>
    </citation>
    <scope>NUCLEOTIDE SEQUENCE [LARGE SCALE GENOMIC DNA]</scope>
    <source>
        <strain evidence="10">Bristol N2</strain>
    </source>
</reference>
<reference evidence="9" key="2">
    <citation type="journal article" date="2002" name="Neurosci. Lett.">
        <title>Caenorhabditis elegans receptors related to mammalian vascular endothelial growth factor receptors are expressed in neural cells.</title>
        <authorList>
            <person name="Popovici C."/>
            <person name="Isnardon D."/>
            <person name="Birnbaum D."/>
            <person name="Roubin R."/>
        </authorList>
    </citation>
    <scope>TISSUE SPECIFICITY</scope>
</reference>
<reference evidence="9" key="3">
    <citation type="journal article" date="2013" name="Development">
        <title>C. elegans PVF-1 inhibits permissive UNC-40 signalling through CED-10 GTPase to position the male ray 1 sensillum.</title>
        <authorList>
            <person name="Dalpe G."/>
            <person name="Tarsitano M."/>
            <person name="Persico M.G."/>
            <person name="Zheng H."/>
            <person name="Culotti J."/>
        </authorList>
    </citation>
    <scope>FUNCTION</scope>
</reference>
<evidence type="ECO:0000255" key="1"/>
<evidence type="ECO:0000255" key="2">
    <source>
        <dbReference type="PROSITE-ProRule" id="PRU00114"/>
    </source>
</evidence>
<evidence type="ECO:0000255" key="3">
    <source>
        <dbReference type="PROSITE-ProRule" id="PRU00159"/>
    </source>
</evidence>
<evidence type="ECO:0000255" key="4">
    <source>
        <dbReference type="PROSITE-ProRule" id="PRU00498"/>
    </source>
</evidence>
<evidence type="ECO:0000256" key="5">
    <source>
        <dbReference type="SAM" id="MobiDB-lite"/>
    </source>
</evidence>
<evidence type="ECO:0000269" key="6">
    <source>
    </source>
</evidence>
<evidence type="ECO:0000269" key="7">
    <source>
    </source>
</evidence>
<evidence type="ECO:0000303" key="8">
    <source>
    </source>
</evidence>
<evidence type="ECO:0000305" key="9"/>
<evidence type="ECO:0000312" key="10">
    <source>
        <dbReference type="Proteomes" id="UP000001940"/>
    </source>
</evidence>
<evidence type="ECO:0000312" key="11">
    <source>
        <dbReference type="WormBase" id="F59F3.1"/>
    </source>
</evidence>
<name>VER3_CAEEL</name>
<comment type="function">
    <text evidence="7">Receptor tyrosine kinase which may be involved, downstream of pvf-1, in the positioning of ray 1, the most anterior ray sensillum in the male tail.</text>
</comment>
<comment type="catalytic activity">
    <reaction>
        <text>L-tyrosyl-[protein] + ATP = O-phospho-L-tyrosyl-[protein] + ADP + H(+)</text>
        <dbReference type="Rhea" id="RHEA:10596"/>
        <dbReference type="Rhea" id="RHEA-COMP:10136"/>
        <dbReference type="Rhea" id="RHEA-COMP:20101"/>
        <dbReference type="ChEBI" id="CHEBI:15378"/>
        <dbReference type="ChEBI" id="CHEBI:30616"/>
        <dbReference type="ChEBI" id="CHEBI:46858"/>
        <dbReference type="ChEBI" id="CHEBI:61978"/>
        <dbReference type="ChEBI" id="CHEBI:456216"/>
        <dbReference type="EC" id="2.7.10.1"/>
    </reaction>
</comment>
<comment type="subcellular location">
    <subcellularLocation>
        <location evidence="9">Cell membrane</location>
        <topology evidence="9">Single-pass type I membrane protein</topology>
    </subcellularLocation>
</comment>
<comment type="tissue specificity">
    <text evidence="6">Expressed in the ALA neuron.</text>
</comment>
<comment type="similarity">
    <text evidence="3">Belongs to the protein kinase superfamily. Tyr protein kinase family.</text>
</comment>
<accession>Q21038</accession>
<organism evidence="10">
    <name type="scientific">Caenorhabditis elegans</name>
    <dbReference type="NCBI Taxonomy" id="6239"/>
    <lineage>
        <taxon>Eukaryota</taxon>
        <taxon>Metazoa</taxon>
        <taxon>Ecdysozoa</taxon>
        <taxon>Nematoda</taxon>
        <taxon>Chromadorea</taxon>
        <taxon>Rhabditida</taxon>
        <taxon>Rhabditina</taxon>
        <taxon>Rhabditomorpha</taxon>
        <taxon>Rhabditoidea</taxon>
        <taxon>Rhabditidae</taxon>
        <taxon>Peloderinae</taxon>
        <taxon>Caenorhabditis</taxon>
    </lineage>
</organism>
<proteinExistence type="evidence at transcript level"/>
<feature type="signal peptide" evidence="1">
    <location>
        <begin position="1"/>
        <end position="17"/>
    </location>
</feature>
<feature type="chain" id="PRO_0000434515" description="Tyrosine-protein kinase receptor ver-3" evidence="9">
    <location>
        <begin position="18"/>
        <end position="1227"/>
    </location>
</feature>
<feature type="topological domain" description="Extracellular" evidence="1">
    <location>
        <begin position="18"/>
        <end position="764"/>
    </location>
</feature>
<feature type="transmembrane region" description="Helical" evidence="1">
    <location>
        <begin position="765"/>
        <end position="785"/>
    </location>
</feature>
<feature type="topological domain" description="Cytoplasmic" evidence="1">
    <location>
        <begin position="786"/>
        <end position="1227"/>
    </location>
</feature>
<feature type="domain" description="Ig-like C2-type 1" evidence="2">
    <location>
        <begin position="20"/>
        <end position="110"/>
    </location>
</feature>
<feature type="domain" description="Ig-like C2-type 2" evidence="2">
    <location>
        <begin position="200"/>
        <end position="325"/>
    </location>
</feature>
<feature type="domain" description="Ig-like C2-type 3" evidence="2">
    <location>
        <begin position="565"/>
        <end position="666"/>
    </location>
</feature>
<feature type="domain" description="Ig-like C2-type 4" evidence="2">
    <location>
        <begin position="673"/>
        <end position="758"/>
    </location>
</feature>
<feature type="domain" description="Protein kinase" evidence="3">
    <location>
        <begin position="847"/>
        <end position="1175"/>
    </location>
</feature>
<feature type="region of interest" description="Disordered" evidence="5">
    <location>
        <begin position="1194"/>
        <end position="1227"/>
    </location>
</feature>
<feature type="compositionally biased region" description="Basic and acidic residues" evidence="5">
    <location>
        <begin position="1214"/>
        <end position="1227"/>
    </location>
</feature>
<feature type="active site" description="Proton acceptor" evidence="3">
    <location>
        <position position="1030"/>
    </location>
</feature>
<feature type="binding site" evidence="3">
    <location>
        <begin position="853"/>
        <end position="861"/>
    </location>
    <ligand>
        <name>ATP</name>
        <dbReference type="ChEBI" id="CHEBI:30616"/>
    </ligand>
</feature>
<feature type="binding site" evidence="3">
    <location>
        <position position="886"/>
    </location>
    <ligand>
        <name>ATP</name>
        <dbReference type="ChEBI" id="CHEBI:30616"/>
    </ligand>
</feature>
<feature type="glycosylation site" description="N-linked (GlcNAc...) asparagine" evidence="4">
    <location>
        <position position="119"/>
    </location>
</feature>
<feature type="glycosylation site" description="N-linked (GlcNAc...) asparagine" evidence="4">
    <location>
        <position position="211"/>
    </location>
</feature>
<feature type="glycosylation site" description="N-linked (GlcNAc...) asparagine" evidence="4">
    <location>
        <position position="245"/>
    </location>
</feature>
<feature type="glycosylation site" description="N-linked (GlcNAc...) asparagine" evidence="4">
    <location>
        <position position="255"/>
    </location>
</feature>
<feature type="glycosylation site" description="N-linked (GlcNAc...) asparagine" evidence="4">
    <location>
        <position position="381"/>
    </location>
</feature>
<feature type="glycosylation site" description="N-linked (GlcNAc...) asparagine" evidence="4">
    <location>
        <position position="425"/>
    </location>
</feature>
<feature type="glycosylation site" description="N-linked (GlcNAc...) asparagine" evidence="4">
    <location>
        <position position="528"/>
    </location>
</feature>
<feature type="glycosylation site" description="N-linked (GlcNAc...) asparagine" evidence="4">
    <location>
        <position position="697"/>
    </location>
</feature>
<feature type="disulfide bond" evidence="2">
    <location>
        <begin position="52"/>
        <end position="110"/>
    </location>
</feature>
<feature type="disulfide bond" evidence="2">
    <location>
        <begin position="204"/>
        <end position="313"/>
    </location>
</feature>
<feature type="disulfide bond" evidence="2">
    <location>
        <begin position="592"/>
        <end position="650"/>
    </location>
</feature>
<feature type="disulfide bond" evidence="2">
    <location>
        <begin position="696"/>
        <end position="740"/>
    </location>
</feature>
<keyword id="KW-0067">ATP-binding</keyword>
<keyword id="KW-1003">Cell membrane</keyword>
<keyword id="KW-1015">Disulfide bond</keyword>
<keyword id="KW-0325">Glycoprotein</keyword>
<keyword id="KW-0393">Immunoglobulin domain</keyword>
<keyword id="KW-0418">Kinase</keyword>
<keyword id="KW-0472">Membrane</keyword>
<keyword id="KW-0547">Nucleotide-binding</keyword>
<keyword id="KW-0675">Receptor</keyword>
<keyword id="KW-1185">Reference proteome</keyword>
<keyword id="KW-0677">Repeat</keyword>
<keyword id="KW-0732">Signal</keyword>
<keyword id="KW-0808">Transferase</keyword>
<keyword id="KW-0812">Transmembrane</keyword>
<keyword id="KW-1133">Transmembrane helix</keyword>
<keyword id="KW-0829">Tyrosine-protein kinase</keyword>
<dbReference type="EC" id="2.7.10.1"/>
<dbReference type="EMBL" id="BX284606">
    <property type="protein sequence ID" value="CAA91990.1"/>
    <property type="molecule type" value="Genomic_DNA"/>
</dbReference>
<dbReference type="PIR" id="T23004">
    <property type="entry name" value="T23004"/>
</dbReference>
<dbReference type="RefSeq" id="NP_509836.1">
    <property type="nucleotide sequence ID" value="NM_077435.7"/>
</dbReference>
<dbReference type="SMR" id="Q21038"/>
<dbReference type="DIP" id="DIP-26190N"/>
<dbReference type="FunCoup" id="Q21038">
    <property type="interactions" value="2031"/>
</dbReference>
<dbReference type="STRING" id="6239.F59F3.1.1"/>
<dbReference type="GlyCosmos" id="Q21038">
    <property type="glycosylation" value="8 sites, No reported glycans"/>
</dbReference>
<dbReference type="PaxDb" id="6239-F59F3.1"/>
<dbReference type="PeptideAtlas" id="Q21038"/>
<dbReference type="EnsemblMetazoa" id="F59F3.1.1">
    <property type="protein sequence ID" value="F59F3.1.1"/>
    <property type="gene ID" value="WBGene00006896"/>
</dbReference>
<dbReference type="GeneID" id="181289"/>
<dbReference type="KEGG" id="cel:CELE_F59F3.1"/>
<dbReference type="UCSC" id="F59F3.1">
    <property type="organism name" value="c. elegans"/>
</dbReference>
<dbReference type="AGR" id="WB:WBGene00006896"/>
<dbReference type="CTD" id="181289"/>
<dbReference type="WormBase" id="F59F3.1">
    <property type="protein sequence ID" value="CE03437"/>
    <property type="gene ID" value="WBGene00006896"/>
    <property type="gene designation" value="ver-3"/>
</dbReference>
<dbReference type="eggNOG" id="KOG0200">
    <property type="taxonomic scope" value="Eukaryota"/>
</dbReference>
<dbReference type="GeneTree" id="ENSGT00970000195899"/>
<dbReference type="HOGENOM" id="CLU_260533_0_0_1"/>
<dbReference type="InParanoid" id="Q21038"/>
<dbReference type="OMA" id="KIMCAIG"/>
<dbReference type="OrthoDB" id="5912975at2759"/>
<dbReference type="PhylomeDB" id="Q21038"/>
<dbReference type="PRO" id="PR:Q21038"/>
<dbReference type="Proteomes" id="UP000001940">
    <property type="component" value="Chromosome X"/>
</dbReference>
<dbReference type="Bgee" id="WBGene00006896">
    <property type="expression patterns" value="Expressed in pharyngeal muscle cell (C elegans) and 3 other cell types or tissues"/>
</dbReference>
<dbReference type="GO" id="GO:0005886">
    <property type="term" value="C:plasma membrane"/>
    <property type="evidence" value="ECO:0000318"/>
    <property type="project" value="GO_Central"/>
</dbReference>
<dbReference type="GO" id="GO:0043235">
    <property type="term" value="C:receptor complex"/>
    <property type="evidence" value="ECO:0000318"/>
    <property type="project" value="GO_Central"/>
</dbReference>
<dbReference type="GO" id="GO:0005524">
    <property type="term" value="F:ATP binding"/>
    <property type="evidence" value="ECO:0007669"/>
    <property type="project" value="UniProtKB-KW"/>
</dbReference>
<dbReference type="GO" id="GO:0004714">
    <property type="term" value="F:transmembrane receptor protein tyrosine kinase activity"/>
    <property type="evidence" value="ECO:0000318"/>
    <property type="project" value="GO_Central"/>
</dbReference>
<dbReference type="GO" id="GO:0007169">
    <property type="term" value="P:cell surface receptor protein tyrosine kinase signaling pathway"/>
    <property type="evidence" value="ECO:0000318"/>
    <property type="project" value="GO_Central"/>
</dbReference>
<dbReference type="GO" id="GO:0045138">
    <property type="term" value="P:nematode male tail tip morphogenesis"/>
    <property type="evidence" value="ECO:0000316"/>
    <property type="project" value="WormBase"/>
</dbReference>
<dbReference type="CDD" id="cd00096">
    <property type="entry name" value="Ig"/>
    <property type="match status" value="1"/>
</dbReference>
<dbReference type="CDD" id="cd00192">
    <property type="entry name" value="PTKc"/>
    <property type="match status" value="1"/>
</dbReference>
<dbReference type="FunFam" id="1.10.510.10:FF:002728">
    <property type="match status" value="1"/>
</dbReference>
<dbReference type="FunFam" id="3.30.200.20:FF:000586">
    <property type="entry name" value="Receptor protein-tyrosine kinase"/>
    <property type="match status" value="1"/>
</dbReference>
<dbReference type="Gene3D" id="2.60.40.10">
    <property type="entry name" value="Immunoglobulins"/>
    <property type="match status" value="5"/>
</dbReference>
<dbReference type="Gene3D" id="3.30.200.20">
    <property type="entry name" value="Phosphorylase Kinase, domain 1"/>
    <property type="match status" value="1"/>
</dbReference>
<dbReference type="Gene3D" id="1.10.510.10">
    <property type="entry name" value="Transferase(Phosphotransferase) domain 1"/>
    <property type="match status" value="1"/>
</dbReference>
<dbReference type="InterPro" id="IPR007110">
    <property type="entry name" value="Ig-like_dom"/>
</dbReference>
<dbReference type="InterPro" id="IPR036179">
    <property type="entry name" value="Ig-like_dom_sf"/>
</dbReference>
<dbReference type="InterPro" id="IPR013783">
    <property type="entry name" value="Ig-like_fold"/>
</dbReference>
<dbReference type="InterPro" id="IPR003599">
    <property type="entry name" value="Ig_sub"/>
</dbReference>
<dbReference type="InterPro" id="IPR003598">
    <property type="entry name" value="Ig_sub2"/>
</dbReference>
<dbReference type="InterPro" id="IPR011009">
    <property type="entry name" value="Kinase-like_dom_sf"/>
</dbReference>
<dbReference type="InterPro" id="IPR000719">
    <property type="entry name" value="Prot_kinase_dom"/>
</dbReference>
<dbReference type="InterPro" id="IPR017441">
    <property type="entry name" value="Protein_kinase_ATP_BS"/>
</dbReference>
<dbReference type="InterPro" id="IPR050122">
    <property type="entry name" value="RTK"/>
</dbReference>
<dbReference type="InterPro" id="IPR001245">
    <property type="entry name" value="Ser-Thr/Tyr_kinase_cat_dom"/>
</dbReference>
<dbReference type="InterPro" id="IPR008266">
    <property type="entry name" value="Tyr_kinase_AS"/>
</dbReference>
<dbReference type="InterPro" id="IPR020635">
    <property type="entry name" value="Tyr_kinase_cat_dom"/>
</dbReference>
<dbReference type="PANTHER" id="PTHR24416:SF602">
    <property type="entry name" value="PROTEIN VER-1-RELATED"/>
    <property type="match status" value="1"/>
</dbReference>
<dbReference type="PANTHER" id="PTHR24416">
    <property type="entry name" value="TYROSINE-PROTEIN KINASE RECEPTOR"/>
    <property type="match status" value="1"/>
</dbReference>
<dbReference type="Pfam" id="PF13927">
    <property type="entry name" value="Ig_3"/>
    <property type="match status" value="2"/>
</dbReference>
<dbReference type="Pfam" id="PF07714">
    <property type="entry name" value="PK_Tyr_Ser-Thr"/>
    <property type="match status" value="1"/>
</dbReference>
<dbReference type="PIRSF" id="PIRSF000615">
    <property type="entry name" value="TyrPK_CSF1-R"/>
    <property type="match status" value="1"/>
</dbReference>
<dbReference type="SMART" id="SM00409">
    <property type="entry name" value="IG"/>
    <property type="match status" value="4"/>
</dbReference>
<dbReference type="SMART" id="SM00408">
    <property type="entry name" value="IGc2"/>
    <property type="match status" value="4"/>
</dbReference>
<dbReference type="SMART" id="SM00219">
    <property type="entry name" value="TyrKc"/>
    <property type="match status" value="1"/>
</dbReference>
<dbReference type="SUPFAM" id="SSF48726">
    <property type="entry name" value="Immunoglobulin"/>
    <property type="match status" value="4"/>
</dbReference>
<dbReference type="SUPFAM" id="SSF56112">
    <property type="entry name" value="Protein kinase-like (PK-like)"/>
    <property type="match status" value="1"/>
</dbReference>
<dbReference type="PROSITE" id="PS50835">
    <property type="entry name" value="IG_LIKE"/>
    <property type="match status" value="3"/>
</dbReference>
<dbReference type="PROSITE" id="PS00107">
    <property type="entry name" value="PROTEIN_KINASE_ATP"/>
    <property type="match status" value="1"/>
</dbReference>
<dbReference type="PROSITE" id="PS50011">
    <property type="entry name" value="PROTEIN_KINASE_DOM"/>
    <property type="match status" value="1"/>
</dbReference>
<dbReference type="PROSITE" id="PS00109">
    <property type="entry name" value="PROTEIN_KINASE_TYR"/>
    <property type="match status" value="1"/>
</dbReference>
<protein>
    <recommendedName>
        <fullName evidence="9">Tyrosine-protein kinase receptor ver-3</fullName>
        <ecNumber>2.7.10.1</ecNumber>
    </recommendedName>
    <alternativeName>
        <fullName evidence="8">Vascular endothelial growth factor receptor related 3</fullName>
    </alternativeName>
</protein>